<reference key="1">
    <citation type="submission" date="2007-04" db="EMBL/GenBank/DDBJ databases">
        <title>Complete sequence of Pseudomonas mendocina ymp.</title>
        <authorList>
            <consortium name="US DOE Joint Genome Institute"/>
            <person name="Copeland A."/>
            <person name="Lucas S."/>
            <person name="Lapidus A."/>
            <person name="Barry K."/>
            <person name="Glavina del Rio T."/>
            <person name="Dalin E."/>
            <person name="Tice H."/>
            <person name="Pitluck S."/>
            <person name="Kiss H."/>
            <person name="Brettin T."/>
            <person name="Detter J.C."/>
            <person name="Bruce D."/>
            <person name="Han C."/>
            <person name="Schmutz J."/>
            <person name="Larimer F."/>
            <person name="Land M."/>
            <person name="Hauser L."/>
            <person name="Kyrpides N."/>
            <person name="Mikhailova N."/>
            <person name="Hersman L."/>
            <person name="Dubois J."/>
            <person name="Maurice P."/>
            <person name="Richardson P."/>
        </authorList>
    </citation>
    <scope>NUCLEOTIDE SEQUENCE [LARGE SCALE GENOMIC DNA]</scope>
    <source>
        <strain>ymp</strain>
    </source>
</reference>
<feature type="chain" id="PRO_1000049322" description="Small ribosomal subunit protein bS16">
    <location>
        <begin position="1"/>
        <end position="83"/>
    </location>
</feature>
<proteinExistence type="inferred from homology"/>
<keyword id="KW-0687">Ribonucleoprotein</keyword>
<keyword id="KW-0689">Ribosomal protein</keyword>
<comment type="similarity">
    <text evidence="1">Belongs to the bacterial ribosomal protein bS16 family.</text>
</comment>
<name>RS16_ECTM1</name>
<accession>A4XXT7</accession>
<organism>
    <name type="scientific">Ectopseudomonas mendocina (strain ymp)</name>
    <name type="common">Pseudomonas mendocina</name>
    <dbReference type="NCBI Taxonomy" id="399739"/>
    <lineage>
        <taxon>Bacteria</taxon>
        <taxon>Pseudomonadati</taxon>
        <taxon>Pseudomonadota</taxon>
        <taxon>Gammaproteobacteria</taxon>
        <taxon>Pseudomonadales</taxon>
        <taxon>Pseudomonadaceae</taxon>
        <taxon>Ectopseudomonas</taxon>
    </lineage>
</organism>
<sequence>MVTIRLARGGSKKRPFYHLTVTNSRNARDGRFVERIGFFNPIAAGGEVRLSVDQERATYWLGQGAQPSERVAQLLKEAAKAAA</sequence>
<gene>
    <name evidence="1" type="primary">rpsP</name>
    <name type="ordered locus">Pmen_3401</name>
</gene>
<evidence type="ECO:0000255" key="1">
    <source>
        <dbReference type="HAMAP-Rule" id="MF_00385"/>
    </source>
</evidence>
<evidence type="ECO:0000305" key="2"/>
<dbReference type="EMBL" id="CP000680">
    <property type="protein sequence ID" value="ABP86153.1"/>
    <property type="molecule type" value="Genomic_DNA"/>
</dbReference>
<dbReference type="SMR" id="A4XXT7"/>
<dbReference type="STRING" id="399739.Pmen_3401"/>
<dbReference type="KEGG" id="pmy:Pmen_3401"/>
<dbReference type="eggNOG" id="COG0228">
    <property type="taxonomic scope" value="Bacteria"/>
</dbReference>
<dbReference type="HOGENOM" id="CLU_100590_5_1_6"/>
<dbReference type="OrthoDB" id="9807878at2"/>
<dbReference type="GO" id="GO:0005737">
    <property type="term" value="C:cytoplasm"/>
    <property type="evidence" value="ECO:0007669"/>
    <property type="project" value="UniProtKB-ARBA"/>
</dbReference>
<dbReference type="GO" id="GO:0015935">
    <property type="term" value="C:small ribosomal subunit"/>
    <property type="evidence" value="ECO:0007669"/>
    <property type="project" value="TreeGrafter"/>
</dbReference>
<dbReference type="GO" id="GO:0003735">
    <property type="term" value="F:structural constituent of ribosome"/>
    <property type="evidence" value="ECO:0007669"/>
    <property type="project" value="InterPro"/>
</dbReference>
<dbReference type="GO" id="GO:0006412">
    <property type="term" value="P:translation"/>
    <property type="evidence" value="ECO:0007669"/>
    <property type="project" value="UniProtKB-UniRule"/>
</dbReference>
<dbReference type="FunFam" id="3.30.1320.10:FF:000001">
    <property type="entry name" value="30S ribosomal protein S16"/>
    <property type="match status" value="1"/>
</dbReference>
<dbReference type="Gene3D" id="3.30.1320.10">
    <property type="match status" value="1"/>
</dbReference>
<dbReference type="HAMAP" id="MF_00385">
    <property type="entry name" value="Ribosomal_bS16"/>
    <property type="match status" value="1"/>
</dbReference>
<dbReference type="InterPro" id="IPR000307">
    <property type="entry name" value="Ribosomal_bS16"/>
</dbReference>
<dbReference type="InterPro" id="IPR023803">
    <property type="entry name" value="Ribosomal_bS16_dom_sf"/>
</dbReference>
<dbReference type="NCBIfam" id="TIGR00002">
    <property type="entry name" value="S16"/>
    <property type="match status" value="1"/>
</dbReference>
<dbReference type="PANTHER" id="PTHR12919">
    <property type="entry name" value="30S RIBOSOMAL PROTEIN S16"/>
    <property type="match status" value="1"/>
</dbReference>
<dbReference type="PANTHER" id="PTHR12919:SF20">
    <property type="entry name" value="SMALL RIBOSOMAL SUBUNIT PROTEIN BS16M"/>
    <property type="match status" value="1"/>
</dbReference>
<dbReference type="Pfam" id="PF00886">
    <property type="entry name" value="Ribosomal_S16"/>
    <property type="match status" value="1"/>
</dbReference>
<dbReference type="SUPFAM" id="SSF54565">
    <property type="entry name" value="Ribosomal protein S16"/>
    <property type="match status" value="1"/>
</dbReference>
<protein>
    <recommendedName>
        <fullName evidence="1">Small ribosomal subunit protein bS16</fullName>
    </recommendedName>
    <alternativeName>
        <fullName evidence="2">30S ribosomal protein S16</fullName>
    </alternativeName>
</protein>